<accession>Q32HQ4</accession>
<proteinExistence type="inferred from homology"/>
<name>RUTF_SHIDS</name>
<comment type="function">
    <text evidence="1">Catalyzes the reduction of FMN to FMNH2 which is used to reduce pyrimidine by RutA via the Rut pathway.</text>
</comment>
<comment type="catalytic activity">
    <reaction evidence="1">
        <text>FMNH2 + NAD(+) = FMN + NADH + 2 H(+)</text>
        <dbReference type="Rhea" id="RHEA:21620"/>
        <dbReference type="ChEBI" id="CHEBI:15378"/>
        <dbReference type="ChEBI" id="CHEBI:57540"/>
        <dbReference type="ChEBI" id="CHEBI:57618"/>
        <dbReference type="ChEBI" id="CHEBI:57945"/>
        <dbReference type="ChEBI" id="CHEBI:58210"/>
        <dbReference type="EC" id="1.5.1.42"/>
    </reaction>
</comment>
<comment type="induction">
    <text evidence="1">Up-regulated by the nitrogen regulatory protein C (NtrC also called GlnG) and repressed by RutR.</text>
</comment>
<comment type="similarity">
    <text evidence="1">Belongs to the non-flavoprotein flavin reductase family. RutF subfamily.</text>
</comment>
<dbReference type="EC" id="1.5.1.42" evidence="1"/>
<dbReference type="EMBL" id="CP000034">
    <property type="protein sequence ID" value="ABB61151.1"/>
    <property type="molecule type" value="Genomic_DNA"/>
</dbReference>
<dbReference type="RefSeq" id="YP_402642.1">
    <property type="nucleotide sequence ID" value="NC_007606.1"/>
</dbReference>
<dbReference type="SMR" id="Q32HQ4"/>
<dbReference type="STRING" id="300267.SDY_0982"/>
<dbReference type="EnsemblBacteria" id="ABB61151">
    <property type="protein sequence ID" value="ABB61151"/>
    <property type="gene ID" value="SDY_0982"/>
</dbReference>
<dbReference type="KEGG" id="sdy:SDY_0982"/>
<dbReference type="PATRIC" id="fig|300267.13.peg.1142"/>
<dbReference type="HOGENOM" id="CLU_059021_2_2_6"/>
<dbReference type="Proteomes" id="UP000002716">
    <property type="component" value="Chromosome"/>
</dbReference>
<dbReference type="GO" id="GO:0010181">
    <property type="term" value="F:FMN binding"/>
    <property type="evidence" value="ECO:0007669"/>
    <property type="project" value="InterPro"/>
</dbReference>
<dbReference type="GO" id="GO:0052874">
    <property type="term" value="F:FMN reductase (NADH) activity"/>
    <property type="evidence" value="ECO:0007669"/>
    <property type="project" value="UniProtKB-EC"/>
</dbReference>
<dbReference type="GO" id="GO:0008752">
    <property type="term" value="F:FMN reductase [NAD(P)H] activity"/>
    <property type="evidence" value="ECO:0007669"/>
    <property type="project" value="InterPro"/>
</dbReference>
<dbReference type="GO" id="GO:0042602">
    <property type="term" value="F:riboflavin reductase (NADPH) activity"/>
    <property type="evidence" value="ECO:0007669"/>
    <property type="project" value="UniProtKB-UniRule"/>
</dbReference>
<dbReference type="GO" id="GO:0019740">
    <property type="term" value="P:nitrogen utilization"/>
    <property type="evidence" value="ECO:0007669"/>
    <property type="project" value="UniProtKB-UniRule"/>
</dbReference>
<dbReference type="GO" id="GO:0006212">
    <property type="term" value="P:uracil catabolic process"/>
    <property type="evidence" value="ECO:0007669"/>
    <property type="project" value="UniProtKB-UniRule"/>
</dbReference>
<dbReference type="FunFam" id="2.30.110.10:FF:000002">
    <property type="entry name" value="FMN reductase (NADH) RutF"/>
    <property type="match status" value="1"/>
</dbReference>
<dbReference type="Gene3D" id="2.30.110.10">
    <property type="entry name" value="Electron Transport, Fmn-binding Protein, Chain A"/>
    <property type="match status" value="1"/>
</dbReference>
<dbReference type="HAMAP" id="MF_00833">
    <property type="entry name" value="RutF"/>
    <property type="match status" value="1"/>
</dbReference>
<dbReference type="InterPro" id="IPR002563">
    <property type="entry name" value="Flavin_Rdtase-like_dom"/>
</dbReference>
<dbReference type="InterPro" id="IPR050268">
    <property type="entry name" value="NADH-dep_flavin_reductase"/>
</dbReference>
<dbReference type="InterPro" id="IPR019917">
    <property type="entry name" value="RutF"/>
</dbReference>
<dbReference type="InterPro" id="IPR012349">
    <property type="entry name" value="Split_barrel_FMN-bd"/>
</dbReference>
<dbReference type="NCBIfam" id="TIGR03615">
    <property type="entry name" value="RutF"/>
    <property type="match status" value="1"/>
</dbReference>
<dbReference type="PANTHER" id="PTHR30466">
    <property type="entry name" value="FLAVIN REDUCTASE"/>
    <property type="match status" value="1"/>
</dbReference>
<dbReference type="PANTHER" id="PTHR30466:SF1">
    <property type="entry name" value="FMN REDUCTASE (NADH) RUTF"/>
    <property type="match status" value="1"/>
</dbReference>
<dbReference type="Pfam" id="PF01613">
    <property type="entry name" value="Flavin_Reduct"/>
    <property type="match status" value="1"/>
</dbReference>
<dbReference type="SMART" id="SM00903">
    <property type="entry name" value="Flavin_Reduct"/>
    <property type="match status" value="1"/>
</dbReference>
<dbReference type="SUPFAM" id="SSF50475">
    <property type="entry name" value="FMN-binding split barrel"/>
    <property type="match status" value="1"/>
</dbReference>
<gene>
    <name evidence="1" type="primary">rutF</name>
    <name type="ordered locus">SDY_0982</name>
</gene>
<keyword id="KW-0285">Flavoprotein</keyword>
<keyword id="KW-0288">FMN</keyword>
<keyword id="KW-0520">NAD</keyword>
<keyword id="KW-0560">Oxidoreductase</keyword>
<keyword id="KW-1185">Reference proteome</keyword>
<reference key="1">
    <citation type="journal article" date="2005" name="Nucleic Acids Res.">
        <title>Genome dynamics and diversity of Shigella species, the etiologic agents of bacillary dysentery.</title>
        <authorList>
            <person name="Yang F."/>
            <person name="Yang J."/>
            <person name="Zhang X."/>
            <person name="Chen L."/>
            <person name="Jiang Y."/>
            <person name="Yan Y."/>
            <person name="Tang X."/>
            <person name="Wang J."/>
            <person name="Xiong Z."/>
            <person name="Dong J."/>
            <person name="Xue Y."/>
            <person name="Zhu Y."/>
            <person name="Xu X."/>
            <person name="Sun L."/>
            <person name="Chen S."/>
            <person name="Nie H."/>
            <person name="Peng J."/>
            <person name="Xu J."/>
            <person name="Wang Y."/>
            <person name="Yuan Z."/>
            <person name="Wen Y."/>
            <person name="Yao Z."/>
            <person name="Shen Y."/>
            <person name="Qiang B."/>
            <person name="Hou Y."/>
            <person name="Yu J."/>
            <person name="Jin Q."/>
        </authorList>
    </citation>
    <scope>NUCLEOTIDE SEQUENCE [LARGE SCALE GENOMIC DNA]</scope>
    <source>
        <strain>Sd197</strain>
    </source>
</reference>
<sequence>MSCMGAAVNIITTDGPAGRAGFTASAVCSVTDTPPTLLVCLNRGASVWPVFNENRTLCVNTLSAGQEPLSNLFGGKTPMEHRFAAARWQTGVTGCPQLEEALVSFDCRISQVVSVGTHDILFCAIEAIHRHATPYGLVWFDRSYHALMRPAC</sequence>
<protein>
    <recommendedName>
        <fullName evidence="1">FMN reductase (NADH) RutF</fullName>
        <ecNumber evidence="1">1.5.1.42</ecNumber>
    </recommendedName>
    <alternativeName>
        <fullName evidence="1">FMN reductase</fullName>
    </alternativeName>
    <alternativeName>
        <fullName evidence="1">NADH-flavin reductase RutF</fullName>
    </alternativeName>
    <alternativeName>
        <fullName evidence="1">NADH:flavin oxidoreductase</fullName>
    </alternativeName>
</protein>
<organism>
    <name type="scientific">Shigella dysenteriae serotype 1 (strain Sd197)</name>
    <dbReference type="NCBI Taxonomy" id="300267"/>
    <lineage>
        <taxon>Bacteria</taxon>
        <taxon>Pseudomonadati</taxon>
        <taxon>Pseudomonadota</taxon>
        <taxon>Gammaproteobacteria</taxon>
        <taxon>Enterobacterales</taxon>
        <taxon>Enterobacteriaceae</taxon>
        <taxon>Shigella</taxon>
    </lineage>
</organism>
<evidence type="ECO:0000255" key="1">
    <source>
        <dbReference type="HAMAP-Rule" id="MF_00833"/>
    </source>
</evidence>
<feature type="chain" id="PRO_0000403043" description="FMN reductase (NADH) RutF">
    <location>
        <begin position="1"/>
        <end position="152"/>
    </location>
</feature>